<evidence type="ECO:0000250" key="1"/>
<evidence type="ECO:0000305" key="2"/>
<dbReference type="EMBL" id="D00423">
    <property type="protein sequence ID" value="BAA00323.1"/>
    <property type="molecule type" value="Genomic_DNA"/>
</dbReference>
<dbReference type="PIR" id="A31813">
    <property type="entry name" value="QQVZCP"/>
</dbReference>
<dbReference type="GO" id="GO:0030430">
    <property type="term" value="C:host cell cytoplasm"/>
    <property type="evidence" value="ECO:0007669"/>
    <property type="project" value="UniProtKB-SubCell"/>
</dbReference>
<dbReference type="GO" id="GO:0044423">
    <property type="term" value="C:virion component"/>
    <property type="evidence" value="ECO:0007669"/>
    <property type="project" value="UniProtKB-KW"/>
</dbReference>
<dbReference type="InterPro" id="IPR005006">
    <property type="entry name" value="Poxvirus_J1"/>
</dbReference>
<dbReference type="Pfam" id="PF03338">
    <property type="entry name" value="Pox_J1"/>
    <property type="match status" value="1"/>
</dbReference>
<accession>P19746</accession>
<keyword id="KW-1035">Host cytoplasm</keyword>
<keyword id="KW-0426">Late protein</keyword>
<keyword id="KW-0946">Virion</keyword>
<reference key="1">
    <citation type="journal article" date="1989" name="J. Gen. Virol.">
        <title>The nucleotide sequence around the capripoxvirus thymidine kinase gene reveals a gene shared specifically with leporipoxvirus.</title>
        <authorList>
            <person name="Gershon P.D."/>
            <person name="Black D.N."/>
        </authorList>
    </citation>
    <scope>NUCLEOTIDE SEQUENCE [GENOMIC DNA]</scope>
</reference>
<sequence length="147" mass="17381">MDHSKYLLTIFLENDDSFFKYLSEQDDETAMSDIETIVTYLNFLLSLLIRSKDKLESIGYYYEPLSEECKTLVDFSNMKNFRILFNKIPINILNKQITVNKGYLSDFVTTLMRLKKELFLESPEPITYIDPRKDPTFLNILSILHEK</sequence>
<organism>
    <name type="scientific">Sheeppox virus (strain KS-1)</name>
    <name type="common">SPPV</name>
    <name type="synonym">Capripoxvirus (strain KS-1)</name>
    <dbReference type="NCBI Taxonomy" id="10269"/>
    <lineage>
        <taxon>Viruses</taxon>
        <taxon>Varidnaviria</taxon>
        <taxon>Bamfordvirae</taxon>
        <taxon>Nucleocytoviricota</taxon>
        <taxon>Pokkesviricetes</taxon>
        <taxon>Chitovirales</taxon>
        <taxon>Poxviridae</taxon>
        <taxon>Chordopoxvirinae</taxon>
        <taxon>Capripoxvirus</taxon>
        <taxon>Sheeppox virus</taxon>
    </lineage>
</organism>
<comment type="function">
    <text evidence="1">Late protein which is a part of a large complex required for early virion morphogenesis. This complex participates in the formation of virosomes and the incorporation of virosomal contents into nascent immature virions. J1 protein is required for DNA packaging during immature virions (IV) formation (By similarity).</text>
</comment>
<comment type="subunit">
    <text evidence="1">Homodimer. Part of a complex composed of A30, G7, F10 kinase, A15, D2, D3, and J1. Interacts with A45 (By similarity).</text>
</comment>
<comment type="subcellular location">
    <subcellularLocation>
        <location>Virion</location>
    </subcellularLocation>
    <subcellularLocation>
        <location evidence="1">Host cytoplasm</location>
    </subcellularLocation>
    <text evidence="1">Localizes in cytoplasmic virus factories. Probably located in between the core and the virion membrane (By similarity).</text>
</comment>
<comment type="induction">
    <text>Expressed in the late phase of the viral replicative cycle.</text>
</comment>
<comment type="similarity">
    <text evidence="2">Belongs to the chordopoxvirinae J1 family.</text>
</comment>
<protein>
    <recommendedName>
        <fullName>Protein J1 homolog</fullName>
    </recommendedName>
    <alternativeName>
        <fullName>Protein F7</fullName>
    </alternativeName>
</protein>
<proteinExistence type="evidence at transcript level"/>
<name>J1_SHEVK</name>
<feature type="chain" id="PRO_0000099591" description="Protein J1 homolog">
    <location>
        <begin position="1"/>
        <end position="147"/>
    </location>
</feature>
<organismHost>
    <name type="scientific">Ovis aries</name>
    <name type="common">Sheep</name>
    <dbReference type="NCBI Taxonomy" id="9940"/>
</organismHost>